<proteinExistence type="evidence at protein level"/>
<sequence length="216" mass="24286">MASLSSNLKTLMTSVHINASELARRTGIAQPIIHRLSTGQNTNPKLATIKPIARYFMVNISQLIGEEPLPSDQSPQITGNYRAWNRVPLISWKDATSWPEALPHYQTSDEVMYISTDANVSKLAYGLIIQGCAMEPLFPNGTTIIVEPERKPKDRDFVVVRLQGEPEARLRQIITEGNDRYLKSLNPELEKLEVARLAQEDQFLGVMAQAKVDFLR</sequence>
<accession>Q83BT6</accession>
<reference key="1">
    <citation type="journal article" date="2003" name="Proc. Natl. Acad. Sci. U.S.A.">
        <title>Complete genome sequence of the Q-fever pathogen, Coxiella burnetii.</title>
        <authorList>
            <person name="Seshadri R."/>
            <person name="Paulsen I.T."/>
            <person name="Eisen J.A."/>
            <person name="Read T.D."/>
            <person name="Nelson K.E."/>
            <person name="Nelson W.C."/>
            <person name="Ward N.L."/>
            <person name="Tettelin H."/>
            <person name="Davidsen T.M."/>
            <person name="Beanan M.J."/>
            <person name="DeBoy R.T."/>
            <person name="Daugherty S.C."/>
            <person name="Brinkac L.M."/>
            <person name="Madupu R."/>
            <person name="Dodson R.J."/>
            <person name="Khouri H.M."/>
            <person name="Lee K.H."/>
            <person name="Carty H.A."/>
            <person name="Scanlan D."/>
            <person name="Heinzen R.A."/>
            <person name="Thompson H.A."/>
            <person name="Samuel J.E."/>
            <person name="Fraser C.M."/>
            <person name="Heidelberg J.F."/>
        </authorList>
    </citation>
    <scope>NUCLEOTIDE SEQUENCE [LARGE SCALE GENOMIC DNA]</scope>
    <source>
        <strain>RSA 493 / Nine Mile phase I</strain>
    </source>
</reference>
<reference key="2">
    <citation type="journal article" date="2007" name="Infect. Immun.">
        <title>Proteome and antigen profiling of Coxiella burnetii developmental forms.</title>
        <authorList>
            <person name="Coleman S.A."/>
            <person name="Fischer E.R."/>
            <person name="Cockrell D.C."/>
            <person name="Voth D.E."/>
            <person name="Howe D."/>
            <person name="Mead D.J."/>
            <person name="Samuel J.E."/>
            <person name="Heinzen R.A."/>
        </authorList>
    </citation>
    <scope>IDENTIFICATION BY MASS SPECTROMETRY</scope>
    <scope>DEVELOPMENTAL STAGE</scope>
    <source>
        <strain>Nine Mile Crazy / RSA 514</strain>
    </source>
</reference>
<evidence type="ECO:0000255" key="1">
    <source>
        <dbReference type="PROSITE-ProRule" id="PRU00257"/>
    </source>
</evidence>
<evidence type="ECO:0000269" key="2">
    <source>
    </source>
</evidence>
<evidence type="ECO:0000305" key="3"/>
<organism>
    <name type="scientific">Coxiella burnetii (strain RSA 493 / Nine Mile phase I)</name>
    <dbReference type="NCBI Taxonomy" id="227377"/>
    <lineage>
        <taxon>Bacteria</taxon>
        <taxon>Pseudomonadati</taxon>
        <taxon>Pseudomonadota</taxon>
        <taxon>Gammaproteobacteria</taxon>
        <taxon>Legionellales</taxon>
        <taxon>Coxiellaceae</taxon>
        <taxon>Coxiella</taxon>
    </lineage>
</organism>
<protein>
    <recommendedName>
        <fullName>Uncharacterized HTH-type transcriptional regulator CBU_1416</fullName>
    </recommendedName>
</protein>
<comment type="developmental stage">
    <text evidence="2">More than twofold more abundant in the large cell variant (LCV) stage than in the small cell variant (SCV) stage (at protein level). LCVs are more metabolically active than SCVs.</text>
</comment>
<comment type="sequence caution" evidence="3">
    <conflict type="erroneous initiation">
        <sequence resource="EMBL-CDS" id="AAO90914"/>
    </conflict>
</comment>
<name>Y1416_COXBU</name>
<keyword id="KW-0238">DNA-binding</keyword>
<keyword id="KW-1185">Reference proteome</keyword>
<keyword id="KW-0804">Transcription</keyword>
<keyword id="KW-0805">Transcription regulation</keyword>
<feature type="chain" id="PRO_0000324817" description="Uncharacterized HTH-type transcriptional regulator CBU_1416">
    <location>
        <begin position="1"/>
        <end position="216"/>
    </location>
</feature>
<feature type="domain" description="HTH cro/C1-type" evidence="1">
    <location>
        <begin position="8"/>
        <end position="63"/>
    </location>
</feature>
<feature type="DNA-binding region" description="H-T-H motif" evidence="1">
    <location>
        <begin position="19"/>
        <end position="38"/>
    </location>
</feature>
<dbReference type="EMBL" id="AE016828">
    <property type="protein sequence ID" value="AAO90914.2"/>
    <property type="status" value="ALT_INIT"/>
    <property type="molecule type" value="Genomic_DNA"/>
</dbReference>
<dbReference type="RefSeq" id="NP_820400.2">
    <property type="nucleotide sequence ID" value="NC_002971.3"/>
</dbReference>
<dbReference type="STRING" id="227377.CBU_1416"/>
<dbReference type="EnsemblBacteria" id="AAO90914">
    <property type="protein sequence ID" value="AAO90914"/>
    <property type="gene ID" value="CBU_1416"/>
</dbReference>
<dbReference type="GeneID" id="1209322"/>
<dbReference type="KEGG" id="cbu:CBU_1416"/>
<dbReference type="PATRIC" id="fig|227377.7.peg.1416"/>
<dbReference type="eggNOG" id="COG1974">
    <property type="taxonomic scope" value="Bacteria"/>
</dbReference>
<dbReference type="HOGENOM" id="CLU_1293816_0_0_6"/>
<dbReference type="OrthoDB" id="9791537at2"/>
<dbReference type="Proteomes" id="UP000002671">
    <property type="component" value="Chromosome"/>
</dbReference>
<dbReference type="GO" id="GO:0032993">
    <property type="term" value="C:protein-DNA complex"/>
    <property type="evidence" value="ECO:0000318"/>
    <property type="project" value="GO_Central"/>
</dbReference>
<dbReference type="GO" id="GO:0001217">
    <property type="term" value="F:DNA-binding transcription repressor activity"/>
    <property type="evidence" value="ECO:0000318"/>
    <property type="project" value="GO_Central"/>
</dbReference>
<dbReference type="GO" id="GO:0043565">
    <property type="term" value="F:sequence-specific DNA binding"/>
    <property type="evidence" value="ECO:0000318"/>
    <property type="project" value="GO_Central"/>
</dbReference>
<dbReference type="GO" id="GO:0045892">
    <property type="term" value="P:negative regulation of DNA-templated transcription"/>
    <property type="evidence" value="ECO:0000318"/>
    <property type="project" value="GO_Central"/>
</dbReference>
<dbReference type="GO" id="GO:0009432">
    <property type="term" value="P:SOS response"/>
    <property type="evidence" value="ECO:0000318"/>
    <property type="project" value="GO_Central"/>
</dbReference>
<dbReference type="CDD" id="cd00093">
    <property type="entry name" value="HTH_XRE"/>
    <property type="match status" value="1"/>
</dbReference>
<dbReference type="CDD" id="cd06529">
    <property type="entry name" value="S24_LexA-like"/>
    <property type="match status" value="1"/>
</dbReference>
<dbReference type="Gene3D" id="1.10.260.40">
    <property type="entry name" value="lambda repressor-like DNA-binding domains"/>
    <property type="match status" value="1"/>
</dbReference>
<dbReference type="Gene3D" id="2.10.109.10">
    <property type="entry name" value="Umud Fragment, subunit A"/>
    <property type="match status" value="1"/>
</dbReference>
<dbReference type="InterPro" id="IPR001387">
    <property type="entry name" value="Cro/C1-type_HTH"/>
</dbReference>
<dbReference type="InterPro" id="IPR010982">
    <property type="entry name" value="Lambda_DNA-bd_dom_sf"/>
</dbReference>
<dbReference type="InterPro" id="IPR039418">
    <property type="entry name" value="LexA-like"/>
</dbReference>
<dbReference type="InterPro" id="IPR036286">
    <property type="entry name" value="LexA/Signal_pep-like_sf"/>
</dbReference>
<dbReference type="InterPro" id="IPR050077">
    <property type="entry name" value="LexA_repressor"/>
</dbReference>
<dbReference type="InterPro" id="IPR015927">
    <property type="entry name" value="Peptidase_S24_S26A/B/C"/>
</dbReference>
<dbReference type="PANTHER" id="PTHR33516">
    <property type="entry name" value="LEXA REPRESSOR"/>
    <property type="match status" value="1"/>
</dbReference>
<dbReference type="PANTHER" id="PTHR33516:SF2">
    <property type="entry name" value="LEXA REPRESSOR-RELATED"/>
    <property type="match status" value="1"/>
</dbReference>
<dbReference type="Pfam" id="PF13443">
    <property type="entry name" value="HTH_26"/>
    <property type="match status" value="1"/>
</dbReference>
<dbReference type="Pfam" id="PF00717">
    <property type="entry name" value="Peptidase_S24"/>
    <property type="match status" value="1"/>
</dbReference>
<dbReference type="SUPFAM" id="SSF47413">
    <property type="entry name" value="lambda repressor-like DNA-binding domains"/>
    <property type="match status" value="1"/>
</dbReference>
<dbReference type="SUPFAM" id="SSF51306">
    <property type="entry name" value="LexA/Signal peptidase"/>
    <property type="match status" value="1"/>
</dbReference>
<dbReference type="PROSITE" id="PS50943">
    <property type="entry name" value="HTH_CROC1"/>
    <property type="match status" value="1"/>
</dbReference>
<gene>
    <name type="ordered locus">CBU_1416</name>
</gene>